<dbReference type="EMBL" id="AF170494">
    <property type="protein sequence ID" value="AAD50976.1"/>
    <property type="molecule type" value="mRNA"/>
</dbReference>
<dbReference type="EMBL" id="AC005700">
    <property type="protein sequence ID" value="AAC69939.2"/>
    <property type="status" value="ALT_SEQ"/>
    <property type="molecule type" value="Genomic_DNA"/>
</dbReference>
<dbReference type="EMBL" id="CP002685">
    <property type="protein sequence ID" value="AEC08676.1"/>
    <property type="status" value="ALT_SEQ"/>
    <property type="molecule type" value="Genomic_DNA"/>
</dbReference>
<dbReference type="EMBL" id="CP002685">
    <property type="protein sequence ID" value="ANM61816.1"/>
    <property type="molecule type" value="Genomic_DNA"/>
</dbReference>
<dbReference type="PIR" id="E84732">
    <property type="entry name" value="E84732"/>
</dbReference>
<dbReference type="PIR" id="T51134">
    <property type="entry name" value="T51134"/>
</dbReference>
<dbReference type="RefSeq" id="NP_001324013.1">
    <molecule id="Q9SW97-1"/>
    <property type="nucleotide sequence ID" value="NM_001336391.1"/>
</dbReference>
<dbReference type="RefSeq" id="NP_565743.1">
    <property type="nucleotide sequence ID" value="NM_128798.1"/>
</dbReference>
<dbReference type="SMR" id="Q9SW97"/>
<dbReference type="FunCoup" id="Q9SW97">
    <property type="interactions" value="253"/>
</dbReference>
<dbReference type="STRING" id="3702.Q9SW97"/>
<dbReference type="GlyCosmos" id="Q9SW97">
    <property type="glycosylation" value="8 sites, No reported glycans"/>
</dbReference>
<dbReference type="GlyGen" id="Q9SW97">
    <property type="glycosylation" value="8 sites"/>
</dbReference>
<dbReference type="iPTMnet" id="Q9SW97"/>
<dbReference type="PaxDb" id="3702-AT2G32390.3"/>
<dbReference type="ProteomicsDB" id="247365">
    <molecule id="Q9SW97-1"/>
</dbReference>
<dbReference type="EnsemblPlants" id="AT2G32390.5">
    <molecule id="Q9SW97-1"/>
    <property type="protein sequence ID" value="AT2G32390.5"/>
    <property type="gene ID" value="AT2G32390"/>
</dbReference>
<dbReference type="GeneID" id="817800"/>
<dbReference type="Gramene" id="AT2G32390.5">
    <molecule id="Q9SW97-1"/>
    <property type="protein sequence ID" value="AT2G32390.5"/>
    <property type="gene ID" value="AT2G32390"/>
</dbReference>
<dbReference type="KEGG" id="ath:AT2G32390"/>
<dbReference type="Araport" id="AT2G32390"/>
<dbReference type="TAIR" id="AT2G32390">
    <property type="gene designation" value="GLR3.5"/>
</dbReference>
<dbReference type="InParanoid" id="Q9SW97"/>
<dbReference type="OMA" id="ENCEASM"/>
<dbReference type="PhylomeDB" id="Q9SW97"/>
<dbReference type="PRO" id="PR:Q9SW97"/>
<dbReference type="Proteomes" id="UP000006548">
    <property type="component" value="Chromosome 2"/>
</dbReference>
<dbReference type="ExpressionAtlas" id="Q9SW97">
    <property type="expression patterns" value="baseline and differential"/>
</dbReference>
<dbReference type="GO" id="GO:0005886">
    <property type="term" value="C:plasma membrane"/>
    <property type="evidence" value="ECO:0000250"/>
    <property type="project" value="UniProtKB"/>
</dbReference>
<dbReference type="GO" id="GO:0005262">
    <property type="term" value="F:calcium channel activity"/>
    <property type="evidence" value="ECO:0000250"/>
    <property type="project" value="UniProtKB"/>
</dbReference>
<dbReference type="GO" id="GO:0008066">
    <property type="term" value="F:glutamate receptor activity"/>
    <property type="evidence" value="ECO:0000250"/>
    <property type="project" value="UniProtKB"/>
</dbReference>
<dbReference type="GO" id="GO:0015276">
    <property type="term" value="F:ligand-gated monoatomic ion channel activity"/>
    <property type="evidence" value="ECO:0007669"/>
    <property type="project" value="InterPro"/>
</dbReference>
<dbReference type="GO" id="GO:0006816">
    <property type="term" value="P:calcium ion transport"/>
    <property type="evidence" value="ECO:0000250"/>
    <property type="project" value="UniProtKB"/>
</dbReference>
<dbReference type="GO" id="GO:0019722">
    <property type="term" value="P:calcium-mediated signaling"/>
    <property type="evidence" value="ECO:0000250"/>
    <property type="project" value="UniProtKB"/>
</dbReference>
<dbReference type="GO" id="GO:0071230">
    <property type="term" value="P:cellular response to amino acid stimulus"/>
    <property type="evidence" value="ECO:0000250"/>
    <property type="project" value="UniProtKB"/>
</dbReference>
<dbReference type="CDD" id="cd13686">
    <property type="entry name" value="GluR_Plant"/>
    <property type="match status" value="1"/>
</dbReference>
<dbReference type="CDD" id="cd19990">
    <property type="entry name" value="PBP1_GABAb_receptor_plant"/>
    <property type="match status" value="1"/>
</dbReference>
<dbReference type="FunFam" id="1.10.287.70:FF:000037">
    <property type="entry name" value="Glutamate receptor"/>
    <property type="match status" value="1"/>
</dbReference>
<dbReference type="FunFam" id="3.40.190.10:FF:000054">
    <property type="entry name" value="Glutamate receptor"/>
    <property type="match status" value="1"/>
</dbReference>
<dbReference type="FunFam" id="3.40.190.10:FF:000175">
    <property type="entry name" value="Glutamate receptor"/>
    <property type="match status" value="1"/>
</dbReference>
<dbReference type="FunFam" id="3.40.50.2300:FF:000081">
    <property type="entry name" value="Glutamate receptor"/>
    <property type="match status" value="1"/>
</dbReference>
<dbReference type="Gene3D" id="1.10.287.70">
    <property type="match status" value="1"/>
</dbReference>
<dbReference type="Gene3D" id="3.40.50.2300">
    <property type="match status" value="2"/>
</dbReference>
<dbReference type="Gene3D" id="3.40.190.10">
    <property type="entry name" value="Periplasmic binding protein-like II"/>
    <property type="match status" value="3"/>
</dbReference>
<dbReference type="InterPro" id="IPR001828">
    <property type="entry name" value="ANF_lig-bd_rcpt"/>
</dbReference>
<dbReference type="InterPro" id="IPR044440">
    <property type="entry name" value="GABAb_receptor_plant_PBP1"/>
</dbReference>
<dbReference type="InterPro" id="IPR019594">
    <property type="entry name" value="Glu/Gly-bd"/>
</dbReference>
<dbReference type="InterPro" id="IPR015683">
    <property type="entry name" value="Ionotropic_Glu_rcpt"/>
</dbReference>
<dbReference type="InterPro" id="IPR001320">
    <property type="entry name" value="Iontro_rcpt_C"/>
</dbReference>
<dbReference type="InterPro" id="IPR017103">
    <property type="entry name" value="Iontropic_Glu_rcpt_pln"/>
</dbReference>
<dbReference type="InterPro" id="IPR028082">
    <property type="entry name" value="Peripla_BP_I"/>
</dbReference>
<dbReference type="PANTHER" id="PTHR18966">
    <property type="entry name" value="IONOTROPIC GLUTAMATE RECEPTOR"/>
    <property type="match status" value="1"/>
</dbReference>
<dbReference type="Pfam" id="PF01094">
    <property type="entry name" value="ANF_receptor"/>
    <property type="match status" value="1"/>
</dbReference>
<dbReference type="Pfam" id="PF00060">
    <property type="entry name" value="Lig_chan"/>
    <property type="match status" value="1"/>
</dbReference>
<dbReference type="Pfam" id="PF10613">
    <property type="entry name" value="Lig_chan-Glu_bd"/>
    <property type="match status" value="1"/>
</dbReference>
<dbReference type="PIRSF" id="PIRSF037090">
    <property type="entry name" value="Iontro_Glu-like_rcpt_pln"/>
    <property type="match status" value="1"/>
</dbReference>
<dbReference type="PRINTS" id="PR01176">
    <property type="entry name" value="GABABRECEPTR"/>
</dbReference>
<dbReference type="SMART" id="SM00079">
    <property type="entry name" value="PBPe"/>
    <property type="match status" value="1"/>
</dbReference>
<dbReference type="SUPFAM" id="SSF53822">
    <property type="entry name" value="Periplasmic binding protein-like I"/>
    <property type="match status" value="1"/>
</dbReference>
<dbReference type="SUPFAM" id="SSF53850">
    <property type="entry name" value="Periplasmic binding protein-like II"/>
    <property type="match status" value="1"/>
</dbReference>
<gene>
    <name type="primary">GLR3.5</name>
    <name type="synonym">GLR6</name>
    <name type="ordered locus">At2g32390</name>
    <name type="ORF">T32F6.9</name>
</gene>
<protein>
    <recommendedName>
        <fullName>Glutamate receptor 3.5</fullName>
    </recommendedName>
    <alternativeName>
        <fullName>Ionotropic glutamate receptor GLR6</fullName>
    </alternativeName>
    <alternativeName>
        <fullName>Ligand-gated ion channel 3.5</fullName>
    </alternativeName>
</protein>
<organism>
    <name type="scientific">Arabidopsis thaliana</name>
    <name type="common">Mouse-ear cress</name>
    <dbReference type="NCBI Taxonomy" id="3702"/>
    <lineage>
        <taxon>Eukaryota</taxon>
        <taxon>Viridiplantae</taxon>
        <taxon>Streptophyta</taxon>
        <taxon>Embryophyta</taxon>
        <taxon>Tracheophyta</taxon>
        <taxon>Spermatophyta</taxon>
        <taxon>Magnoliopsida</taxon>
        <taxon>eudicotyledons</taxon>
        <taxon>Gunneridae</taxon>
        <taxon>Pentapetalae</taxon>
        <taxon>rosids</taxon>
        <taxon>malvids</taxon>
        <taxon>Brassicales</taxon>
        <taxon>Brassicaceae</taxon>
        <taxon>Camelineae</taxon>
        <taxon>Arabidopsis</taxon>
    </lineage>
</organism>
<feature type="signal peptide" evidence="2">
    <location>
        <begin position="1"/>
        <end position="29"/>
    </location>
</feature>
<feature type="chain" id="PRO_0000011609" description="Glutamate receptor 3.5">
    <location>
        <begin position="30"/>
        <end position="953"/>
    </location>
</feature>
<feature type="topological domain" description="Extracellular" evidence="2">
    <location>
        <begin position="30"/>
        <end position="606"/>
    </location>
</feature>
<feature type="transmembrane region" description="Helical" evidence="2">
    <location>
        <begin position="607"/>
        <end position="627"/>
    </location>
</feature>
<feature type="topological domain" description="Cytoplasmic" evidence="2">
    <location>
        <begin position="628"/>
        <end position="636"/>
    </location>
</feature>
<feature type="transmembrane region" description="Helical" evidence="2">
    <location>
        <begin position="637"/>
        <end position="657"/>
    </location>
</feature>
<feature type="topological domain" description="Cytoplasmic" evidence="2">
    <location>
        <begin position="658"/>
        <end position="668"/>
    </location>
</feature>
<feature type="transmembrane region" description="Helical" evidence="2">
    <location>
        <begin position="669"/>
        <end position="689"/>
    </location>
</feature>
<feature type="topological domain" description="Extracellular" evidence="2">
    <location>
        <begin position="690"/>
        <end position="850"/>
    </location>
</feature>
<feature type="transmembrane region" description="Helical" evidence="2">
    <location>
        <begin position="851"/>
        <end position="871"/>
    </location>
</feature>
<feature type="topological domain" description="Cytoplasmic" evidence="2">
    <location>
        <begin position="872"/>
        <end position="953"/>
    </location>
</feature>
<feature type="region of interest" description="Disordered" evidence="3">
    <location>
        <begin position="928"/>
        <end position="953"/>
    </location>
</feature>
<feature type="glycosylation site" description="N-linked (GlcNAc...) asparagine" evidence="2">
    <location>
        <position position="38"/>
    </location>
</feature>
<feature type="glycosylation site" description="N-linked (GlcNAc...) asparagine" evidence="2">
    <location>
        <position position="95"/>
    </location>
</feature>
<feature type="glycosylation site" description="N-linked (GlcNAc...) asparagine" evidence="2">
    <location>
        <position position="223"/>
    </location>
</feature>
<feature type="glycosylation site" description="N-linked (GlcNAc...) asparagine" evidence="2">
    <location>
        <position position="371"/>
    </location>
</feature>
<feature type="glycosylation site" description="N-linked (GlcNAc...) asparagine" evidence="2">
    <location>
        <position position="397"/>
    </location>
</feature>
<feature type="glycosylation site" description="N-linked (GlcNAc...) asparagine" evidence="2">
    <location>
        <position position="436"/>
    </location>
</feature>
<feature type="glycosylation site" description="N-linked (GlcNAc...) asparagine" evidence="2">
    <location>
        <position position="454"/>
    </location>
</feature>
<feature type="glycosylation site" description="N-linked (GlcNAc...) asparagine" evidence="2">
    <location>
        <position position="569"/>
    </location>
</feature>
<feature type="sequence conflict" description="In Ref. 1; AAD50976." evidence="5" ref="1">
    <original>D</original>
    <variation>G</variation>
    <location>
        <position position="78"/>
    </location>
</feature>
<feature type="sequence conflict" description="In Ref. 1; AAD50976." evidence="5" ref="1">
    <original>GALQ</original>
    <variation>E</variation>
    <location>
        <begin position="104"/>
        <end position="107"/>
    </location>
</feature>
<feature type="sequence conflict" description="In Ref. 1; AAD50976." evidence="5" ref="1">
    <original>I</original>
    <variation>V</variation>
    <location>
        <position position="127"/>
    </location>
</feature>
<feature type="sequence conflict" description="In Ref. 1; AAD50976." evidence="5" ref="1">
    <original>R</original>
    <variation>C</variation>
    <location>
        <position position="159"/>
    </location>
</feature>
<feature type="sequence conflict" description="In Ref. 1; AAD50976." evidence="5" ref="1">
    <original>A</original>
    <variation>V</variation>
    <location>
        <position position="443"/>
    </location>
</feature>
<feature type="sequence conflict" description="In Ref. 1; AAD50976." evidence="5" ref="1">
    <original>D</original>
    <variation>N</variation>
    <location>
        <position position="459"/>
    </location>
</feature>
<feature type="sequence conflict" description="In Ref. 1; AAD50976." evidence="5" ref="1">
    <original>V</original>
    <variation>I</variation>
    <location>
        <position position="495"/>
    </location>
</feature>
<feature type="sequence conflict" description="In Ref. 1; AAD50976." evidence="5" ref="1">
    <original>S</original>
    <variation>G</variation>
    <location>
        <position position="550"/>
    </location>
</feature>
<feature type="sequence conflict" description="In Ref. 1; AAD50976." evidence="5" ref="1">
    <original>V</original>
    <variation>A</variation>
    <location>
        <position position="860"/>
    </location>
</feature>
<feature type="sequence conflict" description="In Ref. 1; AAD50976." evidence="5" ref="1">
    <original>Q</original>
    <variation>H</variation>
    <location>
        <position position="878"/>
    </location>
</feature>
<keyword id="KW-0025">Alternative splicing</keyword>
<keyword id="KW-0325">Glycoprotein</keyword>
<keyword id="KW-0407">Ion channel</keyword>
<keyword id="KW-0406">Ion transport</keyword>
<keyword id="KW-1071">Ligand-gated ion channel</keyword>
<keyword id="KW-0472">Membrane</keyword>
<keyword id="KW-0675">Receptor</keyword>
<keyword id="KW-1185">Reference proteome</keyword>
<keyword id="KW-0732">Signal</keyword>
<keyword id="KW-0812">Transmembrane</keyword>
<keyword id="KW-1133">Transmembrane helix</keyword>
<keyword id="KW-0813">Transport</keyword>
<sequence length="953" mass="106811">MGFFVMIRDVSMGFMLLCISALWVLPIQGAGRESFSRNSSSSSLPSSVNVGALFTYDSFIGRAAKLAFVAAIEDINADQSILRGTKLNIVFQDTNCSGFVGTMGALQLMENKVVAAIGPQSSGIGHIISHVANELHVPFLSFAATDPTLSSLQYPYFLRTTQNDYFQMNAITDFVSYFRWREVVAIFVDDEYGRNGISVLGDALAKKRAKISYKAAFPPGADNSSISDLLASVNLMESRIFVVHVNPDSGLNIFSVAKSLGMMGSGYVWITTDWLLTALDSMEPLDPRALDLLQGVVAFRHYTPESDNKRQFKGRWKNLRFKESLKSDDGFNSYALYAYDSVWLVARALDVFFSQGNTVTFSNDPSLRNTNDSGIKLSKLHIFNEGERFLQVILEMNYTGLTGQIEFNSEKNRINPAYDILNIKSTGPLRVGYWSNHTGFSVAPPETLYSKPSNTSAKDQRLNEIIWPGEVIKPPRGWVFPENGKPLKIGVPNRVSYKNYASKDKNPLGVKGFCIDIFEAAIQLLPYPVPRTYILYGDGKKNPSYDNLISEVAANIFDVAVGDVTIITNRTKFVDFTQPFIESGLVVVAPVKGAKSSPWSFLKPFTIEMWAVTGALFLFVGAVIWILEHRFNEEFRGPPRRQIITVFWFSFSTMFFSHRENTVSTLGRFVLLVWLFVVLIINSSYTASLTSILTVQQLTSRIEGMDTLIASNEPIGVQDGTFAWKFLVNELNIAPSRIIPLKDEEEYLSALQRGPRGGGVAAIVDELPYIKALLSNSNCKFRTVGQEFTRTGWGFAFQRDSPLAVDMSTAILQLAEEGKLEKIRKKWLTYDHECTMQISDTENYQISVQSFWGLFLICGVVWFIALTLFCWKVFWQYQRLRPEESDEVQARSEEAGSSRGKSLRAVSFKDLIKVVDKREAEIKEMLKEKSSKKLKDGQSSAENSQSKDHETPQ</sequence>
<accession>Q9SW97</accession>
<accession>F4ITQ1</accession>
<accession>Q9ZV67</accession>
<proteinExistence type="evidence at transcript level"/>
<name>GLR35_ARATH</name>
<comment type="function">
    <text>Glutamate-gated receptor that probably acts as a non-selective cation channel. May be involved in light-signal transduction and calcium homeostasis via the regulation of calcium influx into cells.</text>
</comment>
<comment type="subunit">
    <text evidence="1">May form heteromers.</text>
</comment>
<comment type="subcellular location">
    <subcellularLocation>
        <location>Membrane</location>
        <topology>Multi-pass membrane protein</topology>
    </subcellularLocation>
</comment>
<comment type="alternative products">
    <event type="alternative splicing"/>
    <isoform>
        <id>Q9SW97-1</id>
        <name>1</name>
        <sequence type="displayed"/>
    </isoform>
    <text>A number of isoforms are produced. According to EST sequences.</text>
</comment>
<comment type="tissue specificity">
    <text evidence="4">Expressed predominantly in roots. Also detected in shoots.</text>
</comment>
<comment type="similarity">
    <text evidence="5">Belongs to the glutamate-gated ion channel (TC 1.A.10.1) family.</text>
</comment>
<comment type="sequence caution" evidence="5">
    <conflict type="erroneous gene model prediction">
        <sequence resource="EMBL-CDS" id="AAC69939"/>
    </conflict>
</comment>
<comment type="sequence caution" evidence="5">
    <conflict type="erroneous gene model prediction">
        <sequence resource="EMBL-CDS" id="AEC08676"/>
    </conflict>
</comment>
<reference key="1">
    <citation type="journal article" date="2001" name="Science">
        <title>The identity of plant glutamate receptors.</title>
        <authorList>
            <person name="Lacombe B."/>
            <person name="Becker D."/>
            <person name="Hedrich R."/>
            <person name="DeSalle R."/>
            <person name="Hollmann M."/>
            <person name="Kwak J.M."/>
            <person name="Schroeder J.I."/>
            <person name="Le Novere N."/>
            <person name="Nam H.G."/>
            <person name="Spalding E.P."/>
            <person name="Tester M."/>
            <person name="Turano F.J."/>
            <person name="Chiu J."/>
            <person name="Coruzzi G."/>
        </authorList>
    </citation>
    <scope>NUCLEOTIDE SEQUENCE [MRNA]</scope>
    <scope>GENE FAMILY</scope>
    <scope>NOMENCLATURE</scope>
    <source>
        <tissue>Seedling</tissue>
    </source>
</reference>
<reference key="2">
    <citation type="journal article" date="1999" name="Nature">
        <title>Sequence and analysis of chromosome 2 of the plant Arabidopsis thaliana.</title>
        <authorList>
            <person name="Lin X."/>
            <person name="Kaul S."/>
            <person name="Rounsley S.D."/>
            <person name="Shea T.P."/>
            <person name="Benito M.-I."/>
            <person name="Town C.D."/>
            <person name="Fujii C.Y."/>
            <person name="Mason T.M."/>
            <person name="Bowman C.L."/>
            <person name="Barnstead M.E."/>
            <person name="Feldblyum T.V."/>
            <person name="Buell C.R."/>
            <person name="Ketchum K.A."/>
            <person name="Lee J.J."/>
            <person name="Ronning C.M."/>
            <person name="Koo H.L."/>
            <person name="Moffat K.S."/>
            <person name="Cronin L.A."/>
            <person name="Shen M."/>
            <person name="Pai G."/>
            <person name="Van Aken S."/>
            <person name="Umayam L."/>
            <person name="Tallon L.J."/>
            <person name="Gill J.E."/>
            <person name="Adams M.D."/>
            <person name="Carrera A.J."/>
            <person name="Creasy T.H."/>
            <person name="Goodman H.M."/>
            <person name="Somerville C.R."/>
            <person name="Copenhaver G.P."/>
            <person name="Preuss D."/>
            <person name="Nierman W.C."/>
            <person name="White O."/>
            <person name="Eisen J.A."/>
            <person name="Salzberg S.L."/>
            <person name="Fraser C.M."/>
            <person name="Venter J.C."/>
        </authorList>
    </citation>
    <scope>NUCLEOTIDE SEQUENCE [LARGE SCALE GENOMIC DNA]</scope>
    <source>
        <strain>cv. Columbia</strain>
    </source>
</reference>
<reference key="3">
    <citation type="journal article" date="2017" name="Plant J.">
        <title>Araport11: a complete reannotation of the Arabidopsis thaliana reference genome.</title>
        <authorList>
            <person name="Cheng C.Y."/>
            <person name="Krishnakumar V."/>
            <person name="Chan A.P."/>
            <person name="Thibaud-Nissen F."/>
            <person name="Schobel S."/>
            <person name="Town C.D."/>
        </authorList>
    </citation>
    <scope>GENOME REANNOTATION</scope>
    <source>
        <strain>cv. Columbia</strain>
    </source>
</reference>
<reference key="4">
    <citation type="journal article" date="2002" name="Mol. Biol. Evol.">
        <title>Phylogenetic and expression analysis of the glutamate-receptor-like gene family in Arabidopsis thaliana.</title>
        <authorList>
            <person name="Chiu J.C."/>
            <person name="Brenner E.D."/>
            <person name="DeSalle R."/>
            <person name="Nitabach M.N."/>
            <person name="Holmes T.C."/>
            <person name="Coruzzi G.M."/>
        </authorList>
    </citation>
    <scope>TISSUE SPECIFICITY</scope>
</reference>
<evidence type="ECO:0000250" key="1"/>
<evidence type="ECO:0000255" key="2"/>
<evidence type="ECO:0000256" key="3">
    <source>
        <dbReference type="SAM" id="MobiDB-lite"/>
    </source>
</evidence>
<evidence type="ECO:0000269" key="4">
    <source>
    </source>
</evidence>
<evidence type="ECO:0000305" key="5"/>